<keyword id="KW-0058">Aromatic hydrocarbons catabolism</keyword>
<keyword id="KW-0456">Lyase</keyword>
<keyword id="KW-0464">Manganese</keyword>
<keyword id="KW-0479">Metal-binding</keyword>
<proteinExistence type="inferred from homology"/>
<accession>B7N8Q9</accession>
<gene>
    <name evidence="1" type="primary">mhpE</name>
    <name type="ordered locus">ECUMN_0395</name>
</gene>
<sequence length="337" mass="36470">MNGKKLYISDVTLRDGMHAIRHQYSLENVRQIAKALDDARVDSIEVAHGDGLQGSSFNYGFGAHSDLEWIEAAADVVKHAKIATLLLPGIGTIHDLKNAWQAGARVVRVATHCTEADVSAQHIQYARELGMDTVGFLMMSHMTTPENLAKQAKLMEGYGATCIYVVDSGGAMNMSDIRDRFRALKAELKPETQTGMHAHHNLSLGVANSIAAVEEGCDRIDASLAGMGAGAGNAPLEVFIAAADKLGWQHGTDLYALMDAADDLVRPLQDRPVRVDRETLALGYAGVYSSFLRHCETAAARYGLSAVDILVELGKRRMVGGQEDMIVDVALDLRNNK</sequence>
<protein>
    <recommendedName>
        <fullName evidence="1">4-hydroxy-2-oxovalerate aldolase</fullName>
        <shortName evidence="1">HOA</shortName>
        <ecNumber evidence="1">4.1.3.39</ecNumber>
    </recommendedName>
    <alternativeName>
        <fullName evidence="1">4-hydroxy-2-keto-pentanoic acid aldolase</fullName>
    </alternativeName>
    <alternativeName>
        <fullName evidence="1">4-hydroxy-2-oxopentanoate aldolase</fullName>
    </alternativeName>
</protein>
<comment type="function">
    <text evidence="1">Catalyzes the retro-aldol cleavage of 4-hydroxy-2-oxopentanoate to pyruvate and acetaldehyde. Is involved in the meta-cleavage pathway for the degradation of aromatic compounds.</text>
</comment>
<comment type="catalytic activity">
    <reaction evidence="1">
        <text>(S)-4-hydroxy-2-oxopentanoate = acetaldehyde + pyruvate</text>
        <dbReference type="Rhea" id="RHEA:22624"/>
        <dbReference type="ChEBI" id="CHEBI:15343"/>
        <dbReference type="ChEBI" id="CHEBI:15361"/>
        <dbReference type="ChEBI" id="CHEBI:73143"/>
        <dbReference type="EC" id="4.1.3.39"/>
    </reaction>
</comment>
<comment type="pathway">
    <text evidence="1">Aromatic compound metabolism; 3-phenylpropanoate degradation.</text>
</comment>
<comment type="subunit">
    <text evidence="1">Interacts with MhpF.</text>
</comment>
<comment type="similarity">
    <text evidence="1">Belongs to the 4-hydroxy-2-oxovalerate aldolase family.</text>
</comment>
<evidence type="ECO:0000255" key="1">
    <source>
        <dbReference type="HAMAP-Rule" id="MF_01656"/>
    </source>
</evidence>
<reference key="1">
    <citation type="journal article" date="2009" name="PLoS Genet.">
        <title>Organised genome dynamics in the Escherichia coli species results in highly diverse adaptive paths.</title>
        <authorList>
            <person name="Touchon M."/>
            <person name="Hoede C."/>
            <person name="Tenaillon O."/>
            <person name="Barbe V."/>
            <person name="Baeriswyl S."/>
            <person name="Bidet P."/>
            <person name="Bingen E."/>
            <person name="Bonacorsi S."/>
            <person name="Bouchier C."/>
            <person name="Bouvet O."/>
            <person name="Calteau A."/>
            <person name="Chiapello H."/>
            <person name="Clermont O."/>
            <person name="Cruveiller S."/>
            <person name="Danchin A."/>
            <person name="Diard M."/>
            <person name="Dossat C."/>
            <person name="Karoui M.E."/>
            <person name="Frapy E."/>
            <person name="Garry L."/>
            <person name="Ghigo J.M."/>
            <person name="Gilles A.M."/>
            <person name="Johnson J."/>
            <person name="Le Bouguenec C."/>
            <person name="Lescat M."/>
            <person name="Mangenot S."/>
            <person name="Martinez-Jehanne V."/>
            <person name="Matic I."/>
            <person name="Nassif X."/>
            <person name="Oztas S."/>
            <person name="Petit M.A."/>
            <person name="Pichon C."/>
            <person name="Rouy Z."/>
            <person name="Ruf C.S."/>
            <person name="Schneider D."/>
            <person name="Tourret J."/>
            <person name="Vacherie B."/>
            <person name="Vallenet D."/>
            <person name="Medigue C."/>
            <person name="Rocha E.P.C."/>
            <person name="Denamur E."/>
        </authorList>
    </citation>
    <scope>NUCLEOTIDE SEQUENCE [LARGE SCALE GENOMIC DNA]</scope>
    <source>
        <strain>UMN026 / ExPEC</strain>
    </source>
</reference>
<name>HOA_ECOLU</name>
<dbReference type="EC" id="4.1.3.39" evidence="1"/>
<dbReference type="EMBL" id="CU928163">
    <property type="protein sequence ID" value="CAR11610.1"/>
    <property type="molecule type" value="Genomic_DNA"/>
</dbReference>
<dbReference type="RefSeq" id="WP_001013499.1">
    <property type="nucleotide sequence ID" value="NC_011751.1"/>
</dbReference>
<dbReference type="RefSeq" id="YP_002411158.1">
    <property type="nucleotide sequence ID" value="NC_011751.1"/>
</dbReference>
<dbReference type="SMR" id="B7N8Q9"/>
<dbReference type="STRING" id="585056.ECUMN_0395"/>
<dbReference type="GeneID" id="75202515"/>
<dbReference type="KEGG" id="eum:ECUMN_0395"/>
<dbReference type="PATRIC" id="fig|585056.7.peg.593"/>
<dbReference type="HOGENOM" id="CLU_049173_0_0_6"/>
<dbReference type="UniPathway" id="UPA00714"/>
<dbReference type="Proteomes" id="UP000007097">
    <property type="component" value="Chromosome"/>
</dbReference>
<dbReference type="GO" id="GO:0003852">
    <property type="term" value="F:2-isopropylmalate synthase activity"/>
    <property type="evidence" value="ECO:0007669"/>
    <property type="project" value="TreeGrafter"/>
</dbReference>
<dbReference type="GO" id="GO:0008701">
    <property type="term" value="F:4-hydroxy-2-oxovalerate aldolase activity"/>
    <property type="evidence" value="ECO:0007669"/>
    <property type="project" value="UniProtKB-UniRule"/>
</dbReference>
<dbReference type="GO" id="GO:0030145">
    <property type="term" value="F:manganese ion binding"/>
    <property type="evidence" value="ECO:0007669"/>
    <property type="project" value="UniProtKB-UniRule"/>
</dbReference>
<dbReference type="GO" id="GO:0019380">
    <property type="term" value="P:3-phenylpropionate catabolic process"/>
    <property type="evidence" value="ECO:0007669"/>
    <property type="project" value="UniProtKB-UniRule"/>
</dbReference>
<dbReference type="GO" id="GO:0009098">
    <property type="term" value="P:L-leucine biosynthetic process"/>
    <property type="evidence" value="ECO:0007669"/>
    <property type="project" value="TreeGrafter"/>
</dbReference>
<dbReference type="CDD" id="cd07943">
    <property type="entry name" value="DRE_TIM_HOA"/>
    <property type="match status" value="1"/>
</dbReference>
<dbReference type="FunFam" id="1.10.8.60:FF:000042">
    <property type="entry name" value="4-hydroxy-2-oxovalerate aldolase"/>
    <property type="match status" value="1"/>
</dbReference>
<dbReference type="FunFam" id="3.20.20.70:FF:000072">
    <property type="entry name" value="4-hydroxy-2-oxovalerate aldolase"/>
    <property type="match status" value="1"/>
</dbReference>
<dbReference type="Gene3D" id="1.10.8.60">
    <property type="match status" value="1"/>
</dbReference>
<dbReference type="Gene3D" id="3.20.20.70">
    <property type="entry name" value="Aldolase class I"/>
    <property type="match status" value="1"/>
</dbReference>
<dbReference type="HAMAP" id="MF_01656">
    <property type="entry name" value="HOA"/>
    <property type="match status" value="1"/>
</dbReference>
<dbReference type="InterPro" id="IPR050073">
    <property type="entry name" value="2-IPM_HCS-like"/>
</dbReference>
<dbReference type="InterPro" id="IPR017629">
    <property type="entry name" value="4OH_2_O-val_aldolase"/>
</dbReference>
<dbReference type="InterPro" id="IPR013785">
    <property type="entry name" value="Aldolase_TIM"/>
</dbReference>
<dbReference type="InterPro" id="IPR012425">
    <property type="entry name" value="DmpG_comm"/>
</dbReference>
<dbReference type="InterPro" id="IPR035685">
    <property type="entry name" value="DRE_TIM_HOA"/>
</dbReference>
<dbReference type="InterPro" id="IPR000891">
    <property type="entry name" value="PYR_CT"/>
</dbReference>
<dbReference type="NCBIfam" id="TIGR03217">
    <property type="entry name" value="4OH_2_O_val_ald"/>
    <property type="match status" value="1"/>
</dbReference>
<dbReference type="NCBIfam" id="NF006049">
    <property type="entry name" value="PRK08195.1"/>
    <property type="match status" value="1"/>
</dbReference>
<dbReference type="PANTHER" id="PTHR10277:SF9">
    <property type="entry name" value="2-ISOPROPYLMALATE SYNTHASE 1, CHLOROPLASTIC-RELATED"/>
    <property type="match status" value="1"/>
</dbReference>
<dbReference type="PANTHER" id="PTHR10277">
    <property type="entry name" value="HOMOCITRATE SYNTHASE-RELATED"/>
    <property type="match status" value="1"/>
</dbReference>
<dbReference type="Pfam" id="PF07836">
    <property type="entry name" value="DmpG_comm"/>
    <property type="match status" value="1"/>
</dbReference>
<dbReference type="Pfam" id="PF00682">
    <property type="entry name" value="HMGL-like"/>
    <property type="match status" value="1"/>
</dbReference>
<dbReference type="SUPFAM" id="SSF51569">
    <property type="entry name" value="Aldolase"/>
    <property type="match status" value="1"/>
</dbReference>
<dbReference type="SUPFAM" id="SSF89000">
    <property type="entry name" value="post-HMGL domain-like"/>
    <property type="match status" value="1"/>
</dbReference>
<dbReference type="PROSITE" id="PS50991">
    <property type="entry name" value="PYR_CT"/>
    <property type="match status" value="1"/>
</dbReference>
<feature type="chain" id="PRO_0000387830" description="4-hydroxy-2-oxovalerate aldolase">
    <location>
        <begin position="1"/>
        <end position="337"/>
    </location>
</feature>
<feature type="domain" description="Pyruvate carboxyltransferase" evidence="1">
    <location>
        <begin position="6"/>
        <end position="258"/>
    </location>
</feature>
<feature type="active site" description="Proton acceptor" evidence="1">
    <location>
        <position position="18"/>
    </location>
</feature>
<feature type="binding site" evidence="1">
    <location>
        <begin position="14"/>
        <end position="15"/>
    </location>
    <ligand>
        <name>substrate</name>
    </ligand>
</feature>
<feature type="binding site" evidence="1">
    <location>
        <position position="15"/>
    </location>
    <ligand>
        <name>Mn(2+)</name>
        <dbReference type="ChEBI" id="CHEBI:29035"/>
    </ligand>
</feature>
<feature type="binding site" evidence="1">
    <location>
        <position position="168"/>
    </location>
    <ligand>
        <name>substrate</name>
    </ligand>
</feature>
<feature type="binding site" evidence="1">
    <location>
        <position position="197"/>
    </location>
    <ligand>
        <name>Mn(2+)</name>
        <dbReference type="ChEBI" id="CHEBI:29035"/>
    </ligand>
</feature>
<feature type="binding site" evidence="1">
    <location>
        <position position="197"/>
    </location>
    <ligand>
        <name>substrate</name>
    </ligand>
</feature>
<feature type="binding site" evidence="1">
    <location>
        <position position="199"/>
    </location>
    <ligand>
        <name>Mn(2+)</name>
        <dbReference type="ChEBI" id="CHEBI:29035"/>
    </ligand>
</feature>
<feature type="binding site" evidence="1">
    <location>
        <position position="288"/>
    </location>
    <ligand>
        <name>substrate</name>
    </ligand>
</feature>
<feature type="site" description="Transition state stabilizer" evidence="1">
    <location>
        <position position="14"/>
    </location>
</feature>
<organism>
    <name type="scientific">Escherichia coli O17:K52:H18 (strain UMN026 / ExPEC)</name>
    <dbReference type="NCBI Taxonomy" id="585056"/>
    <lineage>
        <taxon>Bacteria</taxon>
        <taxon>Pseudomonadati</taxon>
        <taxon>Pseudomonadota</taxon>
        <taxon>Gammaproteobacteria</taxon>
        <taxon>Enterobacterales</taxon>
        <taxon>Enterobacteriaceae</taxon>
        <taxon>Escherichia</taxon>
    </lineage>
</organism>